<comment type="function">
    <text evidence="2 3 4">Cytokine with immunoregulatory activity. May promote the transition between innate and adaptive immunity (PubMed:15107555). Induces the production of IgG(1) and IgG(3) in B-cells. Implicated in the generation and maintenance of T follicular helper (Tfh) cells and the formation of germinal-centers. Together with IL6, control the early generation of Tfh cells and are critical for an effective antibody response to acute viral infection (By similarity). May play a role in proliferation and maturation of natural killer (NK) cells in synergy with IL15. May regulate proliferation of mature B- and T-cells in response to activating stimuli. In synergy with IL15 and IL18 stimulates interferon gamma production in T-cells and NK cells (By similarity). During T-cell mediated immune response may inhibit dendritic cells (DC) activation and maturation (By similarity).</text>
</comment>
<comment type="subcellular location">
    <subcellularLocation>
        <location evidence="4">Secreted</location>
    </subcellularLocation>
</comment>
<comment type="similarity">
    <text evidence="5">Belongs to the IL-15/IL-21 family.</text>
</comment>
<comment type="caution">
    <text evidence="5">It is uncertain whether Met-1 or Met-7 is the initiator.</text>
</comment>
<name>IL21_PIG</name>
<reference key="1">
    <citation type="journal article" date="2004" name="J. Vet. Med. Sci.">
        <title>Molecular cloning, chromosomal location, and biological activity of porcine interleukin-21.</title>
        <authorList>
            <person name="Muneta Y."/>
            <person name="Kikuma R."/>
            <person name="Uenishi H."/>
            <person name="Hoshino T."/>
            <person name="Yoshihara K."/>
            <person name="Tanaka M."/>
            <person name="Hamashima N."/>
            <person name="Mori Y."/>
        </authorList>
    </citation>
    <scope>NUCLEOTIDE SEQUENCE [MRNA]</scope>
    <scope>FUNCTION</scope>
    <scope>SUBCELLULAR LOCATION</scope>
</reference>
<organism>
    <name type="scientific">Sus scrofa</name>
    <name type="common">Pig</name>
    <dbReference type="NCBI Taxonomy" id="9823"/>
    <lineage>
        <taxon>Eukaryota</taxon>
        <taxon>Metazoa</taxon>
        <taxon>Chordata</taxon>
        <taxon>Craniata</taxon>
        <taxon>Vertebrata</taxon>
        <taxon>Euteleostomi</taxon>
        <taxon>Mammalia</taxon>
        <taxon>Eutheria</taxon>
        <taxon>Laurasiatheria</taxon>
        <taxon>Artiodactyla</taxon>
        <taxon>Suina</taxon>
        <taxon>Suidae</taxon>
        <taxon>Sus</taxon>
    </lineage>
</organism>
<gene>
    <name type="primary">IL21</name>
</gene>
<keyword id="KW-0202">Cytokine</keyword>
<keyword id="KW-1015">Disulfide bond</keyword>
<keyword id="KW-1185">Reference proteome</keyword>
<keyword id="KW-0964">Secreted</keyword>
<keyword id="KW-0732">Signal</keyword>
<dbReference type="EMBL" id="AB073020">
    <property type="protein sequence ID" value="BAD11128.1"/>
    <property type="molecule type" value="mRNA"/>
</dbReference>
<dbReference type="RefSeq" id="NP_999580.1">
    <property type="nucleotide sequence ID" value="NM_214415.1"/>
</dbReference>
<dbReference type="SMR" id="Q76LU6"/>
<dbReference type="FunCoup" id="Q76LU6">
    <property type="interactions" value="106"/>
</dbReference>
<dbReference type="STRING" id="9823.ENSSSCP00000043300"/>
<dbReference type="PaxDb" id="9823-ENSSSCP00000009696"/>
<dbReference type="GeneID" id="403123"/>
<dbReference type="KEGG" id="ssc:403123"/>
<dbReference type="CTD" id="59067"/>
<dbReference type="eggNOG" id="ENOG502SES1">
    <property type="taxonomic scope" value="Eukaryota"/>
</dbReference>
<dbReference type="InParanoid" id="Q76LU6"/>
<dbReference type="OrthoDB" id="9426569at2759"/>
<dbReference type="Proteomes" id="UP000008227">
    <property type="component" value="Unplaced"/>
</dbReference>
<dbReference type="Proteomes" id="UP000314985">
    <property type="component" value="Unplaced"/>
</dbReference>
<dbReference type="Proteomes" id="UP000694570">
    <property type="component" value="Unplaced"/>
</dbReference>
<dbReference type="Proteomes" id="UP000694571">
    <property type="component" value="Unplaced"/>
</dbReference>
<dbReference type="Proteomes" id="UP000694720">
    <property type="component" value="Unplaced"/>
</dbReference>
<dbReference type="Proteomes" id="UP000694722">
    <property type="component" value="Unplaced"/>
</dbReference>
<dbReference type="Proteomes" id="UP000694723">
    <property type="component" value="Unplaced"/>
</dbReference>
<dbReference type="Proteomes" id="UP000694724">
    <property type="component" value="Unplaced"/>
</dbReference>
<dbReference type="Proteomes" id="UP000694725">
    <property type="component" value="Unplaced"/>
</dbReference>
<dbReference type="Proteomes" id="UP000694726">
    <property type="component" value="Unplaced"/>
</dbReference>
<dbReference type="Proteomes" id="UP000694727">
    <property type="component" value="Unplaced"/>
</dbReference>
<dbReference type="Proteomes" id="UP000694728">
    <property type="component" value="Unplaced"/>
</dbReference>
<dbReference type="GO" id="GO:0005615">
    <property type="term" value="C:extracellular space"/>
    <property type="evidence" value="ECO:0007669"/>
    <property type="project" value="UniProtKB-KW"/>
</dbReference>
<dbReference type="GO" id="GO:0005125">
    <property type="term" value="F:cytokine activity"/>
    <property type="evidence" value="ECO:0007669"/>
    <property type="project" value="UniProtKB-KW"/>
</dbReference>
<dbReference type="GO" id="GO:0005126">
    <property type="term" value="F:cytokine receptor binding"/>
    <property type="evidence" value="ECO:0007669"/>
    <property type="project" value="InterPro"/>
</dbReference>
<dbReference type="GO" id="GO:0098586">
    <property type="term" value="P:cellular response to virus"/>
    <property type="evidence" value="ECO:0000250"/>
    <property type="project" value="UniProtKB"/>
</dbReference>
<dbReference type="GO" id="GO:0002314">
    <property type="term" value="P:germinal center B cell differentiation"/>
    <property type="evidence" value="ECO:0000250"/>
    <property type="project" value="UniProtKB"/>
</dbReference>
<dbReference type="GO" id="GO:0001819">
    <property type="term" value="P:positive regulation of cytokine production"/>
    <property type="evidence" value="ECO:0000318"/>
    <property type="project" value="GO_Central"/>
</dbReference>
<dbReference type="GO" id="GO:0002639">
    <property type="term" value="P:positive regulation of immunoglobulin production"/>
    <property type="evidence" value="ECO:0000250"/>
    <property type="project" value="UniProtKB"/>
</dbReference>
<dbReference type="GO" id="GO:0045954">
    <property type="term" value="P:positive regulation of natural killer cell mediated cytotoxicity"/>
    <property type="evidence" value="ECO:0000318"/>
    <property type="project" value="GO_Central"/>
</dbReference>
<dbReference type="GO" id="GO:0061470">
    <property type="term" value="P:T follicular helper cell differentiation"/>
    <property type="evidence" value="ECO:0000250"/>
    <property type="project" value="UniProtKB"/>
</dbReference>
<dbReference type="FunFam" id="1.20.1250.70:FF:000002">
    <property type="entry name" value="Interleukin"/>
    <property type="match status" value="1"/>
</dbReference>
<dbReference type="Gene3D" id="1.20.1250.70">
    <property type="entry name" value="Interleukin-15/Interleukin-21"/>
    <property type="match status" value="1"/>
</dbReference>
<dbReference type="InterPro" id="IPR009079">
    <property type="entry name" value="4_helix_cytokine-like_core"/>
</dbReference>
<dbReference type="InterPro" id="IPR003443">
    <property type="entry name" value="IL-15/IL-21_fam"/>
</dbReference>
<dbReference type="PANTHER" id="PTHR14356">
    <property type="entry name" value="INTERLEUKIN-15-RELATED"/>
    <property type="match status" value="1"/>
</dbReference>
<dbReference type="PANTHER" id="PTHR14356:SF2">
    <property type="entry name" value="INTERLEUKIN-21"/>
    <property type="match status" value="1"/>
</dbReference>
<dbReference type="Pfam" id="PF02372">
    <property type="entry name" value="IL15"/>
    <property type="match status" value="1"/>
</dbReference>
<dbReference type="SUPFAM" id="SSF47266">
    <property type="entry name" value="4-helical cytokines"/>
    <property type="match status" value="1"/>
</dbReference>
<feature type="signal peptide" evidence="1">
    <location>
        <begin position="1"/>
        <end position="23"/>
    </location>
</feature>
<feature type="chain" id="PRO_0000015508" description="Interleukin-21">
    <location>
        <begin position="24"/>
        <end position="152"/>
    </location>
</feature>
<feature type="disulfide bond" evidence="3">
    <location>
        <begin position="70"/>
        <end position="121"/>
    </location>
</feature>
<feature type="disulfide bond" evidence="3">
    <location>
        <begin position="77"/>
        <end position="124"/>
    </location>
</feature>
<proteinExistence type="evidence at transcript level"/>
<evidence type="ECO:0000250" key="1">
    <source>
        <dbReference type="UniProtKB" id="Q76LU5"/>
    </source>
</evidence>
<evidence type="ECO:0000250" key="2">
    <source>
        <dbReference type="UniProtKB" id="Q9ES17"/>
    </source>
</evidence>
<evidence type="ECO:0000250" key="3">
    <source>
        <dbReference type="UniProtKB" id="Q9HBE4"/>
    </source>
</evidence>
<evidence type="ECO:0000269" key="4">
    <source>
    </source>
</evidence>
<evidence type="ECO:0000305" key="5"/>
<sequence length="152" mass="17575">MRWPGNMEKIVICLMVIFSGTVAHKSSFQGQDRLLIRLRQLIDTVDQLKNYVHDLDPELLPAPEDVQRHCEQSAFSCFQKVELKSANTGDNEKIINVLIKQLKRKLPPTNAGRRQKHGLTCPTCDSYEKKPIKEFLERLKSLIQKMIHQHLS</sequence>
<protein>
    <recommendedName>
        <fullName>Interleukin-21</fullName>
        <shortName>IL-21</shortName>
    </recommendedName>
</protein>
<accession>Q76LU6</accession>